<keyword id="KW-0106">Calcium</keyword>
<keyword id="KW-1015">Disulfide bond</keyword>
<keyword id="KW-0325">Glycoprotein</keyword>
<keyword id="KW-0326">Glycosidase</keyword>
<keyword id="KW-1032">Host cell membrane</keyword>
<keyword id="KW-1043">Host membrane</keyword>
<keyword id="KW-0378">Hydrolase</keyword>
<keyword id="KW-0472">Membrane</keyword>
<keyword id="KW-0479">Metal-binding</keyword>
<keyword id="KW-0735">Signal-anchor</keyword>
<keyword id="KW-0812">Transmembrane</keyword>
<keyword id="KW-1133">Transmembrane helix</keyword>
<keyword id="KW-0946">Virion</keyword>
<sequence>MNPNQKIITIGSICMVIGIVSLMLQIGNIISIWVSHSIQTGNQHQAEPCNQSIITYENNTWVNQTYVNISNTNFLTEKAVASVTLAGNSSLCPISGWAVYSKDNGIRIGSKGDVFVIREPFISCSHLECRTFFLTQGALLNDKHSNGTVKDRSPYRTLMSCPVGEAPSPYNSRFESVAWSASACHDGTSWLTIGISGPDNGAVAVLKYNGIITDTIKSWRNNILRTQESECACVNGSCFTVMTDGPSNGQASYKIFKIEKGKVVKSVELNAPNYHYEECSCYPDAGEITCVCRDNWHGSNRPWVSFNQNLEYQIGYICSGVFGDNPRPNDGTGSCGPVSPNGAYGIKGFSFKYGNGVWIGRTKSTNSRSGFEMIWDPNGWTGTDSNFSVKQDIVAITDWSGYSGSFVQHPELTGLDCIRPCFWVELIRGRPKESTIWTSGSSISFCGVNSDTVGWSWPDGAELPFTIDK</sequence>
<proteinExistence type="inferred from homology"/>
<organismHost>
    <name type="scientific">Aves</name>
    <dbReference type="NCBI Taxonomy" id="8782"/>
</organismHost>
<organismHost>
    <name type="scientific">Felis catus</name>
    <name type="common">Cat</name>
    <name type="synonym">Felis silvestris catus</name>
    <dbReference type="NCBI Taxonomy" id="9685"/>
</organismHost>
<organismHost>
    <name type="scientific">Homo sapiens</name>
    <name type="common">Human</name>
    <dbReference type="NCBI Taxonomy" id="9606"/>
</organismHost>
<organismHost>
    <name type="scientific">Panthera pardus</name>
    <name type="common">Leopard</name>
    <name type="synonym">Felis pardus</name>
    <dbReference type="NCBI Taxonomy" id="9691"/>
</organismHost>
<organismHost>
    <name type="scientific">Panthera tigris</name>
    <name type="common">Tiger</name>
    <dbReference type="NCBI Taxonomy" id="9694"/>
</organismHost>
<organismHost>
    <name type="scientific">Sus scrofa</name>
    <name type="common">Pig</name>
    <dbReference type="NCBI Taxonomy" id="9823"/>
</organismHost>
<reference key="1">
    <citation type="journal article" date="2002" name="Virology">
        <title>H5N1 influenza viruses isolated from geese in Southeastern China: evidence for genetic reassortment and interspecies transmission to ducks.</title>
        <authorList>
            <person name="Guan Y."/>
            <person name="Peiris M."/>
            <person name="Kong K.F."/>
            <person name="Dyrting K.C."/>
            <person name="Ellis T.M."/>
            <person name="Sit T."/>
            <person name="Zhang L.J."/>
            <person name="Shortridge K.F."/>
        </authorList>
    </citation>
    <scope>NUCLEOTIDE SEQUENCE [GENOMIC RNA]</scope>
</reference>
<feature type="chain" id="PRO_0000310929" description="Neuraminidase">
    <location>
        <begin position="1"/>
        <end position="469"/>
    </location>
</feature>
<feature type="topological domain" description="Intravirion" evidence="1">
    <location>
        <begin position="1"/>
        <end position="6"/>
    </location>
</feature>
<feature type="transmembrane region" description="Helical" evidence="1">
    <location>
        <begin position="7"/>
        <end position="27"/>
    </location>
</feature>
<feature type="topological domain" description="Virion surface" evidence="1">
    <location>
        <begin position="28"/>
        <end position="469"/>
    </location>
</feature>
<feature type="region of interest" description="Involved in apical transport and lipid raft association" evidence="1">
    <location>
        <begin position="11"/>
        <end position="33"/>
    </location>
</feature>
<feature type="region of interest" description="Hypervariable stalk region" evidence="1">
    <location>
        <begin position="36"/>
        <end position="90"/>
    </location>
</feature>
<feature type="region of interest" description="Head of neuraminidase" evidence="1">
    <location>
        <begin position="91"/>
        <end position="469"/>
    </location>
</feature>
<feature type="active site" description="Proton donor/acceptor" evidence="1">
    <location>
        <position position="151"/>
    </location>
</feature>
<feature type="active site" description="Nucleophile" evidence="1">
    <location>
        <position position="402"/>
    </location>
</feature>
<feature type="binding site" evidence="1">
    <location>
        <position position="118"/>
    </location>
    <ligand>
        <name>substrate</name>
    </ligand>
</feature>
<feature type="binding site" evidence="1">
    <location>
        <position position="152"/>
    </location>
    <ligand>
        <name>substrate</name>
    </ligand>
</feature>
<feature type="binding site" evidence="1">
    <location>
        <begin position="277"/>
        <end position="278"/>
    </location>
    <ligand>
        <name>substrate</name>
    </ligand>
</feature>
<feature type="binding site" evidence="1">
    <location>
        <position position="293"/>
    </location>
    <ligand>
        <name>substrate</name>
    </ligand>
</feature>
<feature type="binding site" evidence="1">
    <location>
        <position position="294"/>
    </location>
    <ligand>
        <name>Ca(2+)</name>
        <dbReference type="ChEBI" id="CHEBI:29108"/>
    </ligand>
</feature>
<feature type="binding site" evidence="1">
    <location>
        <position position="298"/>
    </location>
    <ligand>
        <name>Ca(2+)</name>
        <dbReference type="ChEBI" id="CHEBI:29108"/>
    </ligand>
</feature>
<feature type="binding site" evidence="1">
    <location>
        <position position="324"/>
    </location>
    <ligand>
        <name>Ca(2+)</name>
        <dbReference type="ChEBI" id="CHEBI:29108"/>
    </ligand>
</feature>
<feature type="binding site" evidence="1">
    <location>
        <position position="368"/>
    </location>
    <ligand>
        <name>substrate</name>
    </ligand>
</feature>
<feature type="glycosylation site" description="N-linked (GlcNAc...) asparagine; by host" evidence="1">
    <location>
        <position position="50"/>
    </location>
</feature>
<feature type="glycosylation site" description="N-linked (GlcNAc...) asparagine; by host" evidence="1">
    <location>
        <position position="58"/>
    </location>
</feature>
<feature type="glycosylation site" description="N-linked (GlcNAc...) asparagine; by host" evidence="1">
    <location>
        <position position="63"/>
    </location>
</feature>
<feature type="glycosylation site" description="N-linked (GlcNAc...) asparagine; by host" evidence="1">
    <location>
        <position position="68"/>
    </location>
</feature>
<feature type="glycosylation site" description="N-linked (GlcNAc...) asparagine; by host" evidence="1">
    <location>
        <position position="88"/>
    </location>
</feature>
<feature type="glycosylation site" description="N-linked (GlcNAc...) asparagine; by host" evidence="1">
    <location>
        <position position="146"/>
    </location>
</feature>
<feature type="glycosylation site" description="N-linked (GlcNAc...) asparagine; by host" evidence="1">
    <location>
        <position position="235"/>
    </location>
</feature>
<feature type="glycosylation site" description="N-linked (GlcNAc...) asparagine; by host" evidence="1">
    <location>
        <position position="386"/>
    </location>
</feature>
<feature type="disulfide bond" evidence="1">
    <location>
        <begin position="92"/>
        <end position="417"/>
    </location>
</feature>
<feature type="disulfide bond" evidence="1">
    <location>
        <begin position="124"/>
        <end position="129"/>
    </location>
</feature>
<feature type="disulfide bond" evidence="1">
    <location>
        <begin position="184"/>
        <end position="231"/>
    </location>
</feature>
<feature type="disulfide bond" evidence="1">
    <location>
        <begin position="233"/>
        <end position="238"/>
    </location>
</feature>
<feature type="disulfide bond" evidence="1">
    <location>
        <begin position="279"/>
        <end position="292"/>
    </location>
</feature>
<feature type="disulfide bond" evidence="1">
    <location>
        <begin position="281"/>
        <end position="290"/>
    </location>
</feature>
<feature type="disulfide bond" evidence="1">
    <location>
        <begin position="318"/>
        <end position="335"/>
    </location>
</feature>
<feature type="disulfide bond" evidence="1">
    <location>
        <begin position="421"/>
        <end position="446"/>
    </location>
</feature>
<comment type="function">
    <text evidence="1">Catalyzes the removal of terminal sialic acid residues from viral and cellular glycoconjugates. Cleaves off the terminal sialic acids on the glycosylated HA during virus budding to facilitate virus release. Additionally helps virus spread through the circulation by further removing sialic acids from the cell surface. These cleavages prevent self-aggregation and ensure the efficient spread of the progeny virus from cell to cell. Otherwise, infection would be limited to one round of replication. Described as a receptor-destroying enzyme because it cleaves a terminal sialic acid from the cellular receptors. May facilitate viral invasion of the upper airways by cleaving the sialic acid moieties on the mucin of the airway epithelial cells. Likely to plays a role in the budding process through its association with lipid rafts during intracellular transport. May additionally display a raft-association independent effect on budding. Plays a role in the determination of host range restriction on replication and virulence. Sialidase activity in late endosome/lysosome traffic seems to enhance virus replication.</text>
</comment>
<comment type="catalytic activity">
    <reaction evidence="1">
        <text>Hydrolysis of alpha-(2-&gt;3)-, alpha-(2-&gt;6)-, alpha-(2-&gt;8)- glycosidic linkages of terminal sialic acid residues in oligosaccharides, glycoproteins, glycolipids, colominic acid and synthetic substrates.</text>
        <dbReference type="EC" id="3.2.1.18"/>
    </reaction>
</comment>
<comment type="cofactor">
    <cofactor evidence="1">
        <name>Ca(2+)</name>
        <dbReference type="ChEBI" id="CHEBI:29108"/>
    </cofactor>
</comment>
<comment type="activity regulation">
    <text evidence="1">Inhibited by the neuraminidase inhibitors zanamivir (Relenza) and oseltamivir (Tamiflu). These drugs interfere with the release of progeny virus from infected cells and are effective against all influenza strains. Resistance to neuraminidase inhibitors is quite rare.</text>
</comment>
<comment type="subunit">
    <text evidence="1">Homotetramer.</text>
</comment>
<comment type="subcellular location">
    <subcellularLocation>
        <location evidence="1">Virion membrane</location>
    </subcellularLocation>
    <subcellularLocation>
        <location evidence="1">Host apical cell membrane</location>
        <topology evidence="1">Single-pass type II membrane protein</topology>
    </subcellularLocation>
    <text evidence="1">Preferentially accumulates at the apical plasma membrane in infected polarized epithelial cells, which is the virus assembly site. Uses lipid rafts for cell surface transport and apical sorting. In the virion, forms a mushroom-shaped spike on the surface of the membrane.</text>
</comment>
<comment type="domain">
    <text evidence="1">Intact N-terminus is essential for virion morphogenesis. Possesses two apical sorting signals, one in the ectodomain, which is likely to be a glycan, and the other in the transmembrane domain. The transmembrane domain also plays a role in lipid raft association.</text>
</comment>
<comment type="PTM">
    <text evidence="1">N-glycosylated.</text>
</comment>
<comment type="miscellaneous">
    <text>The influenza A genome consist of 8 RNA segments. Genetic variation of hemagglutinin and/or neuraminidase genes results in the emergence of new influenza strains. The mechanism of variation can be the result of point mutations or the result of genetic reassortment between segments of two different strains.</text>
</comment>
<comment type="similarity">
    <text evidence="1">Belongs to the glycosyl hydrolase 34 family.</text>
</comment>
<name>NRAM_I00A0</name>
<protein>
    <recommendedName>
        <fullName evidence="1">Neuraminidase</fullName>
        <ecNumber evidence="1">3.2.1.18</ecNumber>
    </recommendedName>
</protein>
<evidence type="ECO:0000255" key="1">
    <source>
        <dbReference type="HAMAP-Rule" id="MF_04071"/>
    </source>
</evidence>
<organism>
    <name type="scientific">Influenza A virus (strain A/Duck/Hong Kong/2986.1/2000 H5N1 genotype C)</name>
    <dbReference type="NCBI Taxonomy" id="176674"/>
    <lineage>
        <taxon>Viruses</taxon>
        <taxon>Riboviria</taxon>
        <taxon>Orthornavirae</taxon>
        <taxon>Negarnaviricota</taxon>
        <taxon>Polyploviricotina</taxon>
        <taxon>Insthoviricetes</taxon>
        <taxon>Articulavirales</taxon>
        <taxon>Orthomyxoviridae</taxon>
        <taxon>Alphainfluenzavirus</taxon>
        <taxon>Alphainfluenzavirus influenzae</taxon>
        <taxon>Influenza A virus</taxon>
    </lineage>
</organism>
<dbReference type="EC" id="3.2.1.18" evidence="1"/>
<dbReference type="EMBL" id="AY059490">
    <property type="protein sequence ID" value="AAL31396.1"/>
    <property type="molecule type" value="Genomic_RNA"/>
</dbReference>
<dbReference type="SMR" id="Q8QPK2"/>
<dbReference type="CAZy" id="GH34">
    <property type="family name" value="Glycoside Hydrolase Family 34"/>
</dbReference>
<dbReference type="GlyCosmos" id="Q8QPK2">
    <property type="glycosylation" value="8 sites, No reported glycans"/>
</dbReference>
<dbReference type="Proteomes" id="UP000008285">
    <property type="component" value="Genome"/>
</dbReference>
<dbReference type="GO" id="GO:0020002">
    <property type="term" value="C:host cell plasma membrane"/>
    <property type="evidence" value="ECO:0007669"/>
    <property type="project" value="UniProtKB-SubCell"/>
</dbReference>
<dbReference type="GO" id="GO:0016020">
    <property type="term" value="C:membrane"/>
    <property type="evidence" value="ECO:0007669"/>
    <property type="project" value="UniProtKB-UniRule"/>
</dbReference>
<dbReference type="GO" id="GO:0055036">
    <property type="term" value="C:virion membrane"/>
    <property type="evidence" value="ECO:0007669"/>
    <property type="project" value="UniProtKB-SubCell"/>
</dbReference>
<dbReference type="GO" id="GO:0004308">
    <property type="term" value="F:exo-alpha-sialidase activity"/>
    <property type="evidence" value="ECO:0007669"/>
    <property type="project" value="UniProtKB-UniRule"/>
</dbReference>
<dbReference type="GO" id="GO:0046872">
    <property type="term" value="F:metal ion binding"/>
    <property type="evidence" value="ECO:0007669"/>
    <property type="project" value="UniProtKB-UniRule"/>
</dbReference>
<dbReference type="GO" id="GO:0005975">
    <property type="term" value="P:carbohydrate metabolic process"/>
    <property type="evidence" value="ECO:0007669"/>
    <property type="project" value="InterPro"/>
</dbReference>
<dbReference type="GO" id="GO:0046761">
    <property type="term" value="P:viral budding from plasma membrane"/>
    <property type="evidence" value="ECO:0007669"/>
    <property type="project" value="UniProtKB-UniRule"/>
</dbReference>
<dbReference type="CDD" id="cd15483">
    <property type="entry name" value="Influenza_NA"/>
    <property type="match status" value="1"/>
</dbReference>
<dbReference type="FunFam" id="2.120.10.10:FF:000001">
    <property type="entry name" value="Neuraminidase"/>
    <property type="match status" value="1"/>
</dbReference>
<dbReference type="Gene3D" id="2.120.10.10">
    <property type="match status" value="1"/>
</dbReference>
<dbReference type="HAMAP" id="MF_04071">
    <property type="entry name" value="INFV_NRAM"/>
    <property type="match status" value="1"/>
</dbReference>
<dbReference type="InterPro" id="IPR001860">
    <property type="entry name" value="Glyco_hydro_34"/>
</dbReference>
<dbReference type="InterPro" id="IPR033654">
    <property type="entry name" value="Sialidase_Influenza_A/B"/>
</dbReference>
<dbReference type="InterPro" id="IPR036278">
    <property type="entry name" value="Sialidase_sf"/>
</dbReference>
<dbReference type="Pfam" id="PF00064">
    <property type="entry name" value="Neur"/>
    <property type="match status" value="1"/>
</dbReference>
<dbReference type="SUPFAM" id="SSF50939">
    <property type="entry name" value="Sialidases"/>
    <property type="match status" value="1"/>
</dbReference>
<gene>
    <name evidence="1" type="primary">NA</name>
</gene>
<accession>Q8QPK2</accession>